<keyword id="KW-0002">3D-structure</keyword>
<keyword id="KW-0007">Acetylation</keyword>
<keyword id="KW-0025">Alternative splicing</keyword>
<keyword id="KW-0067">ATP-binding</keyword>
<keyword id="KW-0092">Biotin</keyword>
<keyword id="KW-0903">Direct protein sequencing</keyword>
<keyword id="KW-0225">Disease variant</keyword>
<keyword id="KW-0436">Ligase</keyword>
<keyword id="KW-0442">Lipid degradation</keyword>
<keyword id="KW-0443">Lipid metabolism</keyword>
<keyword id="KW-0460">Magnesium</keyword>
<keyword id="KW-0464">Manganese</keyword>
<keyword id="KW-0479">Metal-binding</keyword>
<keyword id="KW-0496">Mitochondrion</keyword>
<keyword id="KW-0547">Nucleotide-binding</keyword>
<keyword id="KW-0597">Phosphoprotein</keyword>
<keyword id="KW-1267">Proteomics identification</keyword>
<keyword id="KW-1185">Reference proteome</keyword>
<keyword id="KW-0809">Transit peptide</keyword>
<proteinExistence type="evidence at protein level"/>
<dbReference type="EC" id="6.4.1.3" evidence="16 18"/>
<dbReference type="EMBL" id="AF385926">
    <property type="protein sequence ID" value="AAL66189.1"/>
    <property type="molecule type" value="mRNA"/>
</dbReference>
<dbReference type="EMBL" id="AY035808">
    <property type="protein sequence ID" value="AAK61392.1"/>
    <property type="status" value="ALT_INIT"/>
    <property type="molecule type" value="Genomic_DNA"/>
</dbReference>
<dbReference type="EMBL" id="AY035786">
    <property type="protein sequence ID" value="AAK61392.1"/>
    <property type="status" value="JOINED"/>
    <property type="molecule type" value="Genomic_DNA"/>
</dbReference>
<dbReference type="EMBL" id="AY035787">
    <property type="protein sequence ID" value="AAK61392.1"/>
    <property type="status" value="JOINED"/>
    <property type="molecule type" value="Genomic_DNA"/>
</dbReference>
<dbReference type="EMBL" id="AY035788">
    <property type="protein sequence ID" value="AAK61392.1"/>
    <property type="status" value="JOINED"/>
    <property type="molecule type" value="Genomic_DNA"/>
</dbReference>
<dbReference type="EMBL" id="AY035789">
    <property type="protein sequence ID" value="AAK61392.1"/>
    <property type="status" value="JOINED"/>
    <property type="molecule type" value="Genomic_DNA"/>
</dbReference>
<dbReference type="EMBL" id="AY035790">
    <property type="protein sequence ID" value="AAK61392.1"/>
    <property type="status" value="JOINED"/>
    <property type="molecule type" value="Genomic_DNA"/>
</dbReference>
<dbReference type="EMBL" id="AY035791">
    <property type="protein sequence ID" value="AAK61392.1"/>
    <property type="status" value="JOINED"/>
    <property type="molecule type" value="Genomic_DNA"/>
</dbReference>
<dbReference type="EMBL" id="AY035792">
    <property type="protein sequence ID" value="AAK61392.1"/>
    <property type="status" value="JOINED"/>
    <property type="molecule type" value="Genomic_DNA"/>
</dbReference>
<dbReference type="EMBL" id="AY035793">
    <property type="protein sequence ID" value="AAK61392.1"/>
    <property type="status" value="JOINED"/>
    <property type="molecule type" value="Genomic_DNA"/>
</dbReference>
<dbReference type="EMBL" id="AY035794">
    <property type="protein sequence ID" value="AAK61392.1"/>
    <property type="status" value="JOINED"/>
    <property type="molecule type" value="Genomic_DNA"/>
</dbReference>
<dbReference type="EMBL" id="AY035795">
    <property type="protein sequence ID" value="AAK61392.1"/>
    <property type="status" value="JOINED"/>
    <property type="molecule type" value="Genomic_DNA"/>
</dbReference>
<dbReference type="EMBL" id="AY035796">
    <property type="protein sequence ID" value="AAK61392.1"/>
    <property type="status" value="JOINED"/>
    <property type="molecule type" value="Genomic_DNA"/>
</dbReference>
<dbReference type="EMBL" id="AY035797">
    <property type="protein sequence ID" value="AAK61392.1"/>
    <property type="status" value="JOINED"/>
    <property type="molecule type" value="Genomic_DNA"/>
</dbReference>
<dbReference type="EMBL" id="AY035798">
    <property type="protein sequence ID" value="AAK61392.1"/>
    <property type="status" value="JOINED"/>
    <property type="molecule type" value="Genomic_DNA"/>
</dbReference>
<dbReference type="EMBL" id="AY035799">
    <property type="protein sequence ID" value="AAK61392.1"/>
    <property type="status" value="JOINED"/>
    <property type="molecule type" value="Genomic_DNA"/>
</dbReference>
<dbReference type="EMBL" id="AY035800">
    <property type="protein sequence ID" value="AAK61392.1"/>
    <property type="status" value="JOINED"/>
    <property type="molecule type" value="Genomic_DNA"/>
</dbReference>
<dbReference type="EMBL" id="AY035801">
    <property type="protein sequence ID" value="AAK61392.1"/>
    <property type="status" value="JOINED"/>
    <property type="molecule type" value="Genomic_DNA"/>
</dbReference>
<dbReference type="EMBL" id="AY035802">
    <property type="protein sequence ID" value="AAK61392.1"/>
    <property type="status" value="JOINED"/>
    <property type="molecule type" value="Genomic_DNA"/>
</dbReference>
<dbReference type="EMBL" id="AY035803">
    <property type="protein sequence ID" value="AAK61392.1"/>
    <property type="status" value="JOINED"/>
    <property type="molecule type" value="Genomic_DNA"/>
</dbReference>
<dbReference type="EMBL" id="AY035804">
    <property type="protein sequence ID" value="AAK61392.1"/>
    <property type="status" value="JOINED"/>
    <property type="molecule type" value="Genomic_DNA"/>
</dbReference>
<dbReference type="EMBL" id="AY035805">
    <property type="protein sequence ID" value="AAK61392.1"/>
    <property type="status" value="JOINED"/>
    <property type="molecule type" value="Genomic_DNA"/>
</dbReference>
<dbReference type="EMBL" id="AY035806">
    <property type="protein sequence ID" value="AAK61392.1"/>
    <property type="status" value="JOINED"/>
    <property type="molecule type" value="Genomic_DNA"/>
</dbReference>
<dbReference type="EMBL" id="AY035807">
    <property type="protein sequence ID" value="AAK61392.1"/>
    <property type="status" value="JOINED"/>
    <property type="molecule type" value="Genomic_DNA"/>
</dbReference>
<dbReference type="EMBL" id="AK296771">
    <property type="protein sequence ID" value="BAG59350.1"/>
    <property type="molecule type" value="mRNA"/>
</dbReference>
<dbReference type="EMBL" id="AK298318">
    <property type="protein sequence ID" value="BAG60571.1"/>
    <property type="molecule type" value="mRNA"/>
</dbReference>
<dbReference type="EMBL" id="AL355338">
    <property type="status" value="NOT_ANNOTATED_CDS"/>
    <property type="molecule type" value="Genomic_DNA"/>
</dbReference>
<dbReference type="EMBL" id="AL356575">
    <property type="status" value="NOT_ANNOTATED_CDS"/>
    <property type="molecule type" value="Genomic_DNA"/>
</dbReference>
<dbReference type="EMBL" id="AL136526">
    <property type="status" value="NOT_ANNOTATED_CDS"/>
    <property type="molecule type" value="Genomic_DNA"/>
</dbReference>
<dbReference type="EMBL" id="AL353697">
    <property type="status" value="NOT_ANNOTATED_CDS"/>
    <property type="molecule type" value="Genomic_DNA"/>
</dbReference>
<dbReference type="EMBL" id="CH471085">
    <property type="protein sequence ID" value="EAX09034.1"/>
    <property type="molecule type" value="Genomic_DNA"/>
</dbReference>
<dbReference type="EMBL" id="BC000140">
    <property type="protein sequence ID" value="AAH00140.1"/>
    <property type="status" value="ALT_INIT"/>
    <property type="molecule type" value="mRNA"/>
</dbReference>
<dbReference type="EMBL" id="X14608">
    <property type="protein sequence ID" value="CAA32763.1"/>
    <property type="status" value="ALT_FRAME"/>
    <property type="molecule type" value="mRNA"/>
</dbReference>
<dbReference type="EMBL" id="S55656">
    <property type="protein sequence ID" value="AAB25345.1"/>
    <property type="molecule type" value="mRNA"/>
</dbReference>
<dbReference type="EMBL" id="M13572">
    <property type="protein sequence ID" value="AAA60035.1"/>
    <property type="status" value="ALT_FRAME"/>
    <property type="molecule type" value="mRNA"/>
</dbReference>
<dbReference type="EMBL" id="M26121">
    <property type="protein sequence ID" value="AAA36424.1"/>
    <property type="molecule type" value="mRNA"/>
</dbReference>
<dbReference type="CCDS" id="CCDS45065.1">
    <molecule id="P05165-2"/>
</dbReference>
<dbReference type="CCDS" id="CCDS53878.1">
    <molecule id="P05165-3"/>
</dbReference>
<dbReference type="CCDS" id="CCDS9496.2">
    <molecule id="P05165-1"/>
</dbReference>
<dbReference type="PIR" id="S04613">
    <property type="entry name" value="A27883"/>
</dbReference>
<dbReference type="RefSeq" id="NP_000273.2">
    <molecule id="P05165-1"/>
    <property type="nucleotide sequence ID" value="NM_000282.4"/>
</dbReference>
<dbReference type="RefSeq" id="NP_001121164.1">
    <molecule id="P05165-2"/>
    <property type="nucleotide sequence ID" value="NM_001127692.3"/>
</dbReference>
<dbReference type="RefSeq" id="NP_001171475.1">
    <molecule id="P05165-3"/>
    <property type="nucleotide sequence ID" value="NM_001178004.2"/>
</dbReference>
<dbReference type="PDB" id="2CQY">
    <property type="method" value="NMR"/>
    <property type="chains" value="A=176-270"/>
</dbReference>
<dbReference type="PDB" id="2JKU">
    <property type="method" value="X-ray"/>
    <property type="resolution" value="1.50 A"/>
    <property type="chains" value="A=658-728"/>
</dbReference>
<dbReference type="PDB" id="7YBU">
    <property type="method" value="EM"/>
    <property type="resolution" value="2.20 A"/>
    <property type="chains" value="A/B/D/F/H/J=1-728"/>
</dbReference>
<dbReference type="PDB" id="8XL3">
    <property type="method" value="EM"/>
    <property type="resolution" value="3.02 A"/>
    <property type="chains" value="A/C/E/G/I/K=1-728"/>
</dbReference>
<dbReference type="PDB" id="8XL4">
    <property type="method" value="EM"/>
    <property type="resolution" value="3.38 A"/>
    <property type="chains" value="A/C/E/G/I/K=1-728"/>
</dbReference>
<dbReference type="PDB" id="8XL5">
    <property type="method" value="EM"/>
    <property type="resolution" value="2.80 A"/>
    <property type="chains" value="A/C/E/G/I/K=1-728"/>
</dbReference>
<dbReference type="PDBsum" id="2CQY"/>
<dbReference type="PDBsum" id="2JKU"/>
<dbReference type="PDBsum" id="7YBU"/>
<dbReference type="PDBsum" id="8XL3"/>
<dbReference type="PDBsum" id="8XL4"/>
<dbReference type="PDBsum" id="8XL5"/>
<dbReference type="EMDB" id="EMD-33729"/>
<dbReference type="EMDB" id="EMD-38436"/>
<dbReference type="EMDB" id="EMD-38437"/>
<dbReference type="EMDB" id="EMD-38438"/>
<dbReference type="SMR" id="P05165"/>
<dbReference type="BioGRID" id="111128">
    <property type="interactions" value="162"/>
</dbReference>
<dbReference type="ComplexPortal" id="CPX-6169">
    <property type="entry name" value="Mitochondrial propionyl-CoA carboxylase complex"/>
</dbReference>
<dbReference type="CORUM" id="P05165"/>
<dbReference type="DIP" id="DIP-57493N"/>
<dbReference type="FunCoup" id="P05165">
    <property type="interactions" value="1130"/>
</dbReference>
<dbReference type="IntAct" id="P05165">
    <property type="interactions" value="63"/>
</dbReference>
<dbReference type="MINT" id="P05165"/>
<dbReference type="STRING" id="9606.ENSP00000365462"/>
<dbReference type="DrugBank" id="DB00121">
    <property type="generic name" value="Biotin"/>
</dbReference>
<dbReference type="GlyGen" id="P05165">
    <property type="glycosylation" value="2 sites, 1 O-linked glycan (2 sites)"/>
</dbReference>
<dbReference type="iPTMnet" id="P05165"/>
<dbReference type="PhosphoSitePlus" id="P05165"/>
<dbReference type="SwissPalm" id="P05165"/>
<dbReference type="BioMuta" id="PCCA"/>
<dbReference type="DMDM" id="308153661"/>
<dbReference type="jPOST" id="P05165"/>
<dbReference type="MassIVE" id="P05165"/>
<dbReference type="PaxDb" id="9606-ENSP00000365462"/>
<dbReference type="PeptideAtlas" id="P05165"/>
<dbReference type="ProteomicsDB" id="11147"/>
<dbReference type="ProteomicsDB" id="51814">
    <molecule id="P05165-1"/>
</dbReference>
<dbReference type="ProteomicsDB" id="51815">
    <molecule id="P05165-2"/>
</dbReference>
<dbReference type="Pumba" id="P05165"/>
<dbReference type="Antibodypedia" id="25211">
    <property type="antibodies" value="195 antibodies from 27 providers"/>
</dbReference>
<dbReference type="DNASU" id="5095"/>
<dbReference type="Ensembl" id="ENST00000376279.7">
    <molecule id="P05165-3"/>
    <property type="protein sequence ID" value="ENSP00000365456.3"/>
    <property type="gene ID" value="ENSG00000175198.17"/>
</dbReference>
<dbReference type="Ensembl" id="ENST00000376285.6">
    <molecule id="P05165-1"/>
    <property type="protein sequence ID" value="ENSP00000365462.1"/>
    <property type="gene ID" value="ENSG00000175198.17"/>
</dbReference>
<dbReference type="Ensembl" id="ENST00000376286.8">
    <molecule id="P05165-2"/>
    <property type="protein sequence ID" value="ENSP00000365463.4"/>
    <property type="gene ID" value="ENSG00000175198.17"/>
</dbReference>
<dbReference type="GeneID" id="5095"/>
<dbReference type="KEGG" id="hsa:5095"/>
<dbReference type="MANE-Select" id="ENST00000376285.6">
    <property type="protein sequence ID" value="ENSP00000365462.1"/>
    <property type="RefSeq nucleotide sequence ID" value="NM_000282.4"/>
    <property type="RefSeq protein sequence ID" value="NP_000273.2"/>
</dbReference>
<dbReference type="UCSC" id="uc001voo.4">
    <molecule id="P05165-1"/>
    <property type="organism name" value="human"/>
</dbReference>
<dbReference type="AGR" id="HGNC:8653"/>
<dbReference type="CTD" id="5095"/>
<dbReference type="DisGeNET" id="5095"/>
<dbReference type="GeneCards" id="PCCA"/>
<dbReference type="GeneReviews" id="PCCA"/>
<dbReference type="HGNC" id="HGNC:8653">
    <property type="gene designation" value="PCCA"/>
</dbReference>
<dbReference type="HPA" id="ENSG00000175198">
    <property type="expression patterns" value="Tissue enhanced (epididymis)"/>
</dbReference>
<dbReference type="MalaCards" id="PCCA"/>
<dbReference type="MIM" id="232000">
    <property type="type" value="gene"/>
</dbReference>
<dbReference type="MIM" id="606054">
    <property type="type" value="phenotype"/>
</dbReference>
<dbReference type="neXtProt" id="NX_P05165"/>
<dbReference type="OpenTargets" id="ENSG00000175198"/>
<dbReference type="Orphanet" id="35">
    <property type="disease" value="Propionic acidemia"/>
</dbReference>
<dbReference type="PharmGKB" id="PA32992"/>
<dbReference type="VEuPathDB" id="HostDB:ENSG00000175198"/>
<dbReference type="eggNOG" id="KOG0238">
    <property type="taxonomic scope" value="Eukaryota"/>
</dbReference>
<dbReference type="GeneTree" id="ENSGT00940000156083"/>
<dbReference type="HOGENOM" id="CLU_000395_3_3_1"/>
<dbReference type="InParanoid" id="P05165"/>
<dbReference type="OMA" id="IGPKHYS"/>
<dbReference type="OrthoDB" id="196847at2759"/>
<dbReference type="PAN-GO" id="P05165">
    <property type="GO annotations" value="2 GO annotations based on evolutionary models"/>
</dbReference>
<dbReference type="PhylomeDB" id="P05165"/>
<dbReference type="TreeFam" id="TF354220"/>
<dbReference type="BioCyc" id="MetaCyc:ENSG00000175198-MONOMER"/>
<dbReference type="BRENDA" id="6.4.1.3">
    <property type="organism ID" value="2681"/>
</dbReference>
<dbReference type="PathwayCommons" id="P05165"/>
<dbReference type="Reactome" id="R-HSA-196780">
    <property type="pathway name" value="Biotin transport and metabolism"/>
</dbReference>
<dbReference type="Reactome" id="R-HSA-3371599">
    <property type="pathway name" value="Defective HLCS causes multiple carboxylase deficiency"/>
</dbReference>
<dbReference type="Reactome" id="R-HSA-71032">
    <property type="pathway name" value="Propionyl-CoA catabolism"/>
</dbReference>
<dbReference type="SABIO-RK" id="P05165"/>
<dbReference type="SignaLink" id="P05165"/>
<dbReference type="SIGNOR" id="P05165"/>
<dbReference type="UniPathway" id="UPA00945">
    <property type="reaction ID" value="UER00908"/>
</dbReference>
<dbReference type="BioGRID-ORCS" id="5095">
    <property type="hits" value="14 hits in 1151 CRISPR screens"/>
</dbReference>
<dbReference type="CD-CODE" id="DEE660B4">
    <property type="entry name" value="Stress granule"/>
</dbReference>
<dbReference type="CD-CODE" id="FB4E32DD">
    <property type="entry name" value="Presynaptic clusters and postsynaptic densities"/>
</dbReference>
<dbReference type="ChiTaRS" id="PCCA">
    <property type="organism name" value="human"/>
</dbReference>
<dbReference type="EvolutionaryTrace" id="P05165"/>
<dbReference type="GenomeRNAi" id="5095"/>
<dbReference type="Pharos" id="P05165">
    <property type="development level" value="Tbio"/>
</dbReference>
<dbReference type="PRO" id="PR:P05165"/>
<dbReference type="Proteomes" id="UP000005640">
    <property type="component" value="Chromosome 13"/>
</dbReference>
<dbReference type="RNAct" id="P05165">
    <property type="molecule type" value="protein"/>
</dbReference>
<dbReference type="Bgee" id="ENSG00000175198">
    <property type="expression patterns" value="Expressed in right lobe of liver and 200 other cell types or tissues"/>
</dbReference>
<dbReference type="ExpressionAtlas" id="P05165">
    <property type="expression patterns" value="baseline and differential"/>
</dbReference>
<dbReference type="GO" id="GO:1902494">
    <property type="term" value="C:catalytic complex"/>
    <property type="evidence" value="ECO:0000353"/>
    <property type="project" value="ComplexPortal"/>
</dbReference>
<dbReference type="GO" id="GO:0005829">
    <property type="term" value="C:cytosol"/>
    <property type="evidence" value="ECO:0000304"/>
    <property type="project" value="Reactome"/>
</dbReference>
<dbReference type="GO" id="GO:0005759">
    <property type="term" value="C:mitochondrial matrix"/>
    <property type="evidence" value="ECO:0000314"/>
    <property type="project" value="UniProtKB"/>
</dbReference>
<dbReference type="GO" id="GO:0005739">
    <property type="term" value="C:mitochondrion"/>
    <property type="evidence" value="ECO:0000314"/>
    <property type="project" value="HPA"/>
</dbReference>
<dbReference type="GO" id="GO:0005524">
    <property type="term" value="F:ATP binding"/>
    <property type="evidence" value="ECO:0007669"/>
    <property type="project" value="UniProtKB-KW"/>
</dbReference>
<dbReference type="GO" id="GO:0009374">
    <property type="term" value="F:biotin binding"/>
    <property type="evidence" value="ECO:0000304"/>
    <property type="project" value="ProtInc"/>
</dbReference>
<dbReference type="GO" id="GO:0019899">
    <property type="term" value="F:enzyme binding"/>
    <property type="evidence" value="ECO:0000353"/>
    <property type="project" value="UniProtKB"/>
</dbReference>
<dbReference type="GO" id="GO:0046872">
    <property type="term" value="F:metal ion binding"/>
    <property type="evidence" value="ECO:0007669"/>
    <property type="project" value="UniProtKB-KW"/>
</dbReference>
<dbReference type="GO" id="GO:0004658">
    <property type="term" value="F:propionyl-CoA carboxylase activity"/>
    <property type="evidence" value="ECO:0000314"/>
    <property type="project" value="UniProtKB"/>
</dbReference>
<dbReference type="GO" id="GO:0009081">
    <property type="term" value="P:branched-chain amino acid metabolic process"/>
    <property type="evidence" value="ECO:0000303"/>
    <property type="project" value="ComplexPortal"/>
</dbReference>
<dbReference type="GO" id="GO:0006631">
    <property type="term" value="P:fatty acid metabolic process"/>
    <property type="evidence" value="ECO:0000303"/>
    <property type="project" value="ComplexPortal"/>
</dbReference>
<dbReference type="GO" id="GO:0019626">
    <property type="term" value="P:short-chain fatty acid catabolic process"/>
    <property type="evidence" value="ECO:0000305"/>
    <property type="project" value="UniProtKB"/>
</dbReference>
<dbReference type="CDD" id="cd06850">
    <property type="entry name" value="biotinyl_domain"/>
    <property type="match status" value="1"/>
</dbReference>
<dbReference type="FunFam" id="3.30.1490.20:FF:000018">
    <property type="entry name" value="Biotin carboxylase"/>
    <property type="match status" value="1"/>
</dbReference>
<dbReference type="FunFam" id="3.30.470.20:FF:000028">
    <property type="entry name" value="Methylcrotonoyl-CoA carboxylase subunit alpha, mitochondrial"/>
    <property type="match status" value="1"/>
</dbReference>
<dbReference type="FunFam" id="3.30.700.30:FF:000001">
    <property type="entry name" value="Propionyl-CoA carboxylase alpha chain, mitochondrial"/>
    <property type="match status" value="1"/>
</dbReference>
<dbReference type="FunFam" id="2.40.50.100:FF:000029">
    <property type="entry name" value="propionyl-CoA carboxylase alpha chain, mitochondrial"/>
    <property type="match status" value="1"/>
</dbReference>
<dbReference type="FunFam" id="3.40.50.20:FF:000010">
    <property type="entry name" value="Propionyl-CoA carboxylase subunit alpha"/>
    <property type="match status" value="1"/>
</dbReference>
<dbReference type="Gene3D" id="2.40.50.100">
    <property type="match status" value="1"/>
</dbReference>
<dbReference type="Gene3D" id="3.30.700.30">
    <property type="match status" value="1"/>
</dbReference>
<dbReference type="Gene3D" id="3.40.50.20">
    <property type="match status" value="1"/>
</dbReference>
<dbReference type="Gene3D" id="3.30.1490.20">
    <property type="entry name" value="ATP-grasp fold, A domain"/>
    <property type="match status" value="1"/>
</dbReference>
<dbReference type="Gene3D" id="3.30.470.20">
    <property type="entry name" value="ATP-grasp fold, B domain"/>
    <property type="match status" value="1"/>
</dbReference>
<dbReference type="InterPro" id="IPR011761">
    <property type="entry name" value="ATP-grasp"/>
</dbReference>
<dbReference type="InterPro" id="IPR013815">
    <property type="entry name" value="ATP_grasp_subdomain_1"/>
</dbReference>
<dbReference type="InterPro" id="IPR005481">
    <property type="entry name" value="BC-like_N"/>
</dbReference>
<dbReference type="InterPro" id="IPR001882">
    <property type="entry name" value="Biotin_BS"/>
</dbReference>
<dbReference type="InterPro" id="IPR050856">
    <property type="entry name" value="Biotin_carboxylase_complex"/>
</dbReference>
<dbReference type="InterPro" id="IPR011764">
    <property type="entry name" value="Biotin_carboxylation_dom"/>
</dbReference>
<dbReference type="InterPro" id="IPR005482">
    <property type="entry name" value="Biotin_COase_C"/>
</dbReference>
<dbReference type="InterPro" id="IPR000089">
    <property type="entry name" value="Biotin_lipoyl"/>
</dbReference>
<dbReference type="InterPro" id="IPR005479">
    <property type="entry name" value="CbamoylP_synth_lsu-like_ATP-bd"/>
</dbReference>
<dbReference type="InterPro" id="IPR041265">
    <property type="entry name" value="PCC_BT"/>
</dbReference>
<dbReference type="InterPro" id="IPR016185">
    <property type="entry name" value="PreATP-grasp_dom_sf"/>
</dbReference>
<dbReference type="InterPro" id="IPR011054">
    <property type="entry name" value="Rudment_hybrid_motif"/>
</dbReference>
<dbReference type="InterPro" id="IPR011053">
    <property type="entry name" value="Single_hybrid_motif"/>
</dbReference>
<dbReference type="NCBIfam" id="NF006367">
    <property type="entry name" value="PRK08591.1"/>
    <property type="match status" value="1"/>
</dbReference>
<dbReference type="PANTHER" id="PTHR18866">
    <property type="entry name" value="CARBOXYLASE:PYRUVATE/ACETYL-COA/PROPIONYL-COA CARBOXYLASE"/>
    <property type="match status" value="1"/>
</dbReference>
<dbReference type="PANTHER" id="PTHR18866:SF33">
    <property type="entry name" value="METHYLCROTONOYL-COA CARBOXYLASE SUBUNIT ALPHA, MITOCHONDRIAL-RELATED"/>
    <property type="match status" value="1"/>
</dbReference>
<dbReference type="Pfam" id="PF02785">
    <property type="entry name" value="Biotin_carb_C"/>
    <property type="match status" value="1"/>
</dbReference>
<dbReference type="Pfam" id="PF00289">
    <property type="entry name" value="Biotin_carb_N"/>
    <property type="match status" value="1"/>
</dbReference>
<dbReference type="Pfam" id="PF00364">
    <property type="entry name" value="Biotin_lipoyl"/>
    <property type="match status" value="1"/>
</dbReference>
<dbReference type="Pfam" id="PF02786">
    <property type="entry name" value="CPSase_L_D2"/>
    <property type="match status" value="1"/>
</dbReference>
<dbReference type="Pfam" id="PF18140">
    <property type="entry name" value="PCC_BT"/>
    <property type="match status" value="1"/>
</dbReference>
<dbReference type="SMART" id="SM00878">
    <property type="entry name" value="Biotin_carb_C"/>
    <property type="match status" value="1"/>
</dbReference>
<dbReference type="SUPFAM" id="SSF56059">
    <property type="entry name" value="Glutathione synthetase ATP-binding domain-like"/>
    <property type="match status" value="1"/>
</dbReference>
<dbReference type="SUPFAM" id="SSF52440">
    <property type="entry name" value="PreATP-grasp domain"/>
    <property type="match status" value="1"/>
</dbReference>
<dbReference type="SUPFAM" id="SSF51246">
    <property type="entry name" value="Rudiment single hybrid motif"/>
    <property type="match status" value="1"/>
</dbReference>
<dbReference type="SUPFAM" id="SSF51230">
    <property type="entry name" value="Single hybrid motif"/>
    <property type="match status" value="1"/>
</dbReference>
<dbReference type="PROSITE" id="PS50975">
    <property type="entry name" value="ATP_GRASP"/>
    <property type="match status" value="1"/>
</dbReference>
<dbReference type="PROSITE" id="PS50979">
    <property type="entry name" value="BC"/>
    <property type="match status" value="1"/>
</dbReference>
<dbReference type="PROSITE" id="PS00188">
    <property type="entry name" value="BIOTIN"/>
    <property type="match status" value="1"/>
</dbReference>
<dbReference type="PROSITE" id="PS50968">
    <property type="entry name" value="BIOTINYL_LIPOYL"/>
    <property type="match status" value="1"/>
</dbReference>
<dbReference type="PROSITE" id="PS00866">
    <property type="entry name" value="CPSASE_1"/>
    <property type="match status" value="1"/>
</dbReference>
<dbReference type="PROSITE" id="PS00867">
    <property type="entry name" value="CPSASE_2"/>
    <property type="match status" value="1"/>
</dbReference>
<organism>
    <name type="scientific">Homo sapiens</name>
    <name type="common">Human</name>
    <dbReference type="NCBI Taxonomy" id="9606"/>
    <lineage>
        <taxon>Eukaryota</taxon>
        <taxon>Metazoa</taxon>
        <taxon>Chordata</taxon>
        <taxon>Craniata</taxon>
        <taxon>Vertebrata</taxon>
        <taxon>Euteleostomi</taxon>
        <taxon>Mammalia</taxon>
        <taxon>Eutheria</taxon>
        <taxon>Euarchontoglires</taxon>
        <taxon>Primates</taxon>
        <taxon>Haplorrhini</taxon>
        <taxon>Catarrhini</taxon>
        <taxon>Hominidae</taxon>
        <taxon>Homo</taxon>
    </lineage>
</organism>
<name>PCCA_HUMAN</name>
<evidence type="ECO:0000250" key="1"/>
<evidence type="ECO:0000250" key="2">
    <source>
        <dbReference type="UniProtKB" id="P0DTA4"/>
    </source>
</evidence>
<evidence type="ECO:0000250" key="3">
    <source>
        <dbReference type="UniProtKB" id="Q5LUF3"/>
    </source>
</evidence>
<evidence type="ECO:0000250" key="4">
    <source>
        <dbReference type="UniProtKB" id="Q91ZA3"/>
    </source>
</evidence>
<evidence type="ECO:0000255" key="5">
    <source>
        <dbReference type="PROSITE-ProRule" id="PRU00409"/>
    </source>
</evidence>
<evidence type="ECO:0000255" key="6">
    <source>
        <dbReference type="PROSITE-ProRule" id="PRU00969"/>
    </source>
</evidence>
<evidence type="ECO:0000255" key="7">
    <source>
        <dbReference type="PROSITE-ProRule" id="PRU01066"/>
    </source>
</evidence>
<evidence type="ECO:0000269" key="8">
    <source>
    </source>
</evidence>
<evidence type="ECO:0000269" key="9">
    <source>
    </source>
</evidence>
<evidence type="ECO:0000269" key="10">
    <source>
    </source>
</evidence>
<evidence type="ECO:0000269" key="11">
    <source>
    </source>
</evidence>
<evidence type="ECO:0000269" key="12">
    <source>
    </source>
</evidence>
<evidence type="ECO:0000269" key="13">
    <source>
    </source>
</evidence>
<evidence type="ECO:0000269" key="14">
    <source>
    </source>
</evidence>
<evidence type="ECO:0000269" key="15">
    <source>
    </source>
</evidence>
<evidence type="ECO:0000269" key="16">
    <source>
    </source>
</evidence>
<evidence type="ECO:0000269" key="17">
    <source>
    </source>
</evidence>
<evidence type="ECO:0000269" key="18">
    <source>
    </source>
</evidence>
<evidence type="ECO:0000303" key="19">
    <source>
    </source>
</evidence>
<evidence type="ECO:0000305" key="20"/>
<evidence type="ECO:0000305" key="21">
    <source>
    </source>
</evidence>
<evidence type="ECO:0000305" key="22">
    <source>
    </source>
</evidence>
<evidence type="ECO:0000312" key="23">
    <source>
        <dbReference type="HGNC" id="HGNC:8653"/>
    </source>
</evidence>
<evidence type="ECO:0007829" key="24">
    <source>
        <dbReference type="PDB" id="2CQY"/>
    </source>
</evidence>
<evidence type="ECO:0007829" key="25">
    <source>
        <dbReference type="PDB" id="2JKU"/>
    </source>
</evidence>
<evidence type="ECO:0007829" key="26">
    <source>
        <dbReference type="PDB" id="7YBU"/>
    </source>
</evidence>
<evidence type="ECO:0007829" key="27">
    <source>
        <dbReference type="PDB" id="8XL5"/>
    </source>
</evidence>
<accession>P05165</accession>
<accession>B4DKY8</accession>
<accession>B4DPF9</accession>
<accession>C9JPQ8</accession>
<accession>Q15979</accession>
<accession>Q8WXQ7</accession>
<gene>
    <name evidence="23" type="primary">PCCA</name>
</gene>
<sequence length="728" mass="80059">MAGFWVGTAPLVAAGRRGRWPPQQLMLSAALRTLKHVLYYSRQCLMVSRNLGSVGYDPNEKTFDKILVANRGEIACRVIRTCKKMGIKTVAIHSDVDASSVHVKMADEAVCVGPAPTSKSYLNMDAIMEAIKKTRAQAVHPGYGFLSENKEFARCLAAEDVVFIGPDTHAIQAMGDKIESKLLAKKAEVNTIPGFDGVVKDAEEAVRIAREIGYPVMIKASAGGGGKGMRIAWDDEETRDGFRLSSQEAASSFGDDRLLIEKFIDNPRHIEIQVLGDKHGNALWLNERECSIQRRNQKVVEEAPSIFLDAETRRAMGEQAVALARAVKYSSAGTVEFLVDSKKNFYFLEMNTRLQVEHPVTECITGLDLVQEMIRVAKGYPLRHKQADIRINGWAVECRVYAEDPYKSFGLPSIGRLSQYQEPLHLPGVRVDSGIQPGSDISIYYDPMISKLITYGSDRTEALKRMADALDNYVIRGVTHNIALLREVIINSRFVKGDISTKFLSDVYPDGFKGHMLTKSEKNQLLAIASSLFVAFQLRAQHFQENSRMPVIKPDIANWELSVKLHDKVHTVVASNNGSVFSVEVDGSKLNVTSTWNLASPLLSVSVDGTQRTVQCLSREAGGNMSIQFLGTVYKVNILTRLAAELNKFMLEKVTEDTSSVLRSPMPGVVVAVSVKPGDAVAEGQEICVIEAMKMQNSMTAGKTGTVKSVHCQAGDTVGEGDLLVELE</sequence>
<protein>
    <recommendedName>
        <fullName evidence="22">Propionyl-CoA carboxylase alpha chain, mitochondrial</fullName>
        <shortName>PCCase subunit alpha</shortName>
        <ecNumber evidence="16 18">6.4.1.3</ecNumber>
    </recommendedName>
    <alternativeName>
        <fullName>Propanoyl-CoA:carbon dioxide ligase subunit alpha</fullName>
    </alternativeName>
</protein>
<comment type="function">
    <text evidence="2 3 8 16 18">This is one of the 2 subunits of the biotin-dependent propionyl-CoA carboxylase (PCC), a mitochondrial enzyme involved in the catabolism of odd chain fatty acids, branched-chain amino acids isoleucine, threonine, methionine, and valine and other metabolites (PubMed:6765947, PubMed:8434582). Propionyl-CoA carboxylase catalyzes the carboxylation of propionyl-CoA/propanoyl-CoA to D-methylmalonyl-CoA/(S)-methylmalonyl-CoA (PubMed:10101253, PubMed:6765947, PubMed:8434582). Within the holoenzyme, the alpha subunit catalyzes the ATP-dependent carboxylation of the biotin carried by the biotin carboxyl carrier (BCC) domain, while the beta subunit then transfers the carboxyl group from carboxylated biotin to propionyl-CoA (By similarity). Propionyl-CoA carboxylase also significantly acts on butyryl-CoA/butanoyl-CoA, which is converted to ethylmalonyl-CoA/(2S)-ethylmalonyl-CoA at a much lower rate (PubMed:6765947). Other alternative minor substrates include (2E)-butenoyl-CoA/crotonoyl-CoA (By similarity).</text>
</comment>
<comment type="catalytic activity">
    <reaction evidence="16 18">
        <text>propanoyl-CoA + hydrogencarbonate + ATP = (S)-methylmalonyl-CoA + ADP + phosphate + H(+)</text>
        <dbReference type="Rhea" id="RHEA:23720"/>
        <dbReference type="ChEBI" id="CHEBI:15378"/>
        <dbReference type="ChEBI" id="CHEBI:17544"/>
        <dbReference type="ChEBI" id="CHEBI:30616"/>
        <dbReference type="ChEBI" id="CHEBI:43474"/>
        <dbReference type="ChEBI" id="CHEBI:57327"/>
        <dbReference type="ChEBI" id="CHEBI:57392"/>
        <dbReference type="ChEBI" id="CHEBI:456216"/>
        <dbReference type="EC" id="6.4.1.3"/>
    </reaction>
    <physiologicalReaction direction="left-to-right" evidence="16 18">
        <dbReference type="Rhea" id="RHEA:23721"/>
    </physiologicalReaction>
</comment>
<comment type="catalytic activity">
    <reaction evidence="2">
        <text>butanoyl-CoA + hydrogencarbonate + ATP = (2S)-ethylmalonyl-CoA + ADP + phosphate + H(+)</text>
        <dbReference type="Rhea" id="RHEA:59520"/>
        <dbReference type="ChEBI" id="CHEBI:15378"/>
        <dbReference type="ChEBI" id="CHEBI:17544"/>
        <dbReference type="ChEBI" id="CHEBI:30616"/>
        <dbReference type="ChEBI" id="CHEBI:43474"/>
        <dbReference type="ChEBI" id="CHEBI:57371"/>
        <dbReference type="ChEBI" id="CHEBI:60909"/>
        <dbReference type="ChEBI" id="CHEBI:456216"/>
    </reaction>
    <physiologicalReaction direction="left-to-right" evidence="2">
        <dbReference type="Rhea" id="RHEA:59521"/>
    </physiologicalReaction>
</comment>
<comment type="cofactor">
    <cofactor evidence="5">
        <name>Mg(2+)</name>
        <dbReference type="ChEBI" id="CHEBI:18420"/>
    </cofactor>
    <cofactor evidence="5">
        <name>Mn(2+)</name>
        <dbReference type="ChEBI" id="CHEBI:29035"/>
    </cofactor>
    <text evidence="5">Binds 2 magnesium or manganese ions per subunit.</text>
</comment>
<comment type="cofactor">
    <cofactor evidence="7 16">
        <name>biotin</name>
        <dbReference type="ChEBI" id="CHEBI:57586"/>
    </cofactor>
</comment>
<comment type="biophysicochemical properties">
    <kinetics>
        <KM evidence="16">0.08 mM for ATP</KM>
        <KM evidence="16">3 mM for hydrogencarbonate</KM>
    </kinetics>
    <phDependence>
        <text evidence="16">Optimum pH is 7.2-8.8 for the propionyl-CoA carboxylase activity measured for the holoenzyme.</text>
    </phDependence>
</comment>
<comment type="pathway">
    <text evidence="16 18">Metabolic intermediate metabolism; propanoyl-CoA degradation; succinyl-CoA from propanoyl-CoA: step 1/3.</text>
</comment>
<comment type="subunit">
    <text evidence="14 15 16 20">The holoenzyme is a dodecamer composed of 6 PCCA/alpha subunits and 6 PCCB/beta subunits (PubMed:20725044, PubMed:6765947). Interacts (via the biotin carboxylation domain) with SIRT4 (PubMed:23438705). Interacts with SIRT3 and SIRT5 (PubMed:23438705).</text>
</comment>
<comment type="interaction">
    <interactant intactId="EBI-2211679">
        <id>P05165</id>
    </interactant>
    <interactant intactId="EBI-307531">
        <id>P23508</id>
        <label>MCC</label>
    </interactant>
    <organismsDiffer>false</organismsDiffer>
    <experiments>3</experiments>
</comment>
<comment type="interaction">
    <interactant intactId="EBI-2211679">
        <id>P05165</id>
    </interactant>
    <interactant intactId="EBI-1371908">
        <id>P05166</id>
        <label>PCCB</label>
    </interactant>
    <organismsDiffer>false</organismsDiffer>
    <experiments>5</experiments>
</comment>
<comment type="subcellular location">
    <subcellularLocation>
        <location evidence="8 12">Mitochondrion matrix</location>
    </subcellularLocation>
</comment>
<comment type="alternative products">
    <event type="alternative splicing"/>
    <isoform>
        <id>P05165-1</id>
        <name>1</name>
        <sequence type="displayed"/>
    </isoform>
    <isoform>
        <id>P05165-2</id>
        <name>2</name>
        <sequence type="described" ref="VSP_039857"/>
    </isoform>
    <isoform>
        <id>P05165-3</id>
        <name>3</name>
        <sequence type="described" ref="VSP_044458"/>
    </isoform>
</comment>
<comment type="domain">
    <text evidence="21">Consists of an N-terminal biotin carboxylation/carboxylase (BC) domain that catalyzes the transient carboxylation of the biotin covalently attached to the C-terminal biotinyl-binding/biotin carboxyl carrier (BCC) domain.</text>
</comment>
<comment type="PTM">
    <text evidence="4">Acetylated.</text>
</comment>
<comment type="PTM">
    <text evidence="9 13 17">The biotin cofactor is covalently attached to the C-terminal biotinyl-binding domain and is required for the catalytic activity (PubMed:10329019). Biotinylation is catalyzed by HLCS (PubMed:20443544, PubMed:7753853).</text>
</comment>
<comment type="disease" evidence="8 9 10 11">
    <disease id="DI-02221">
        <name>Propionic acidemia type I</name>
        <acronym>PA-1</acronym>
        <description>Life-threatening disease characterized by episodic vomiting, lethargy and ketosis, neutropenia, periodic thrombocytopenia, hypogammaglobulinemia, developmental retardation, and intolerance to protein.</description>
        <dbReference type="MIM" id="606054"/>
    </disease>
    <text>The disease is caused by variants affecting the gene represented in this entry.</text>
</comment>
<comment type="sequence caution" evidence="20">
    <conflict type="frameshift">
        <sequence resource="EMBL-CDS" id="AAA60035"/>
    </conflict>
</comment>
<comment type="sequence caution" evidence="20">
    <conflict type="erroneous initiation">
        <sequence resource="EMBL-CDS" id="AAH00140"/>
    </conflict>
    <text>Truncated N-terminus.</text>
</comment>
<comment type="sequence caution" evidence="20">
    <conflict type="erroneous initiation">
        <sequence resource="EMBL-CDS" id="AAK61392"/>
    </conflict>
    <text>Truncated N-terminus.</text>
</comment>
<comment type="sequence caution" evidence="20">
    <conflict type="frameshift">
        <sequence resource="EMBL-CDS" id="CAA32763"/>
    </conflict>
</comment>
<feature type="transit peptide" description="Mitochondrion" evidence="12">
    <location>
        <begin position="1"/>
        <end position="52"/>
    </location>
</feature>
<feature type="chain" id="PRO_0000002837" description="Propionyl-CoA carboxylase alpha chain, mitochondrial">
    <location>
        <begin position="53"/>
        <end position="728"/>
    </location>
</feature>
<feature type="domain" description="Biotin carboxylation" evidence="6">
    <location>
        <begin position="62"/>
        <end position="509"/>
    </location>
</feature>
<feature type="domain" description="ATP-grasp" evidence="5">
    <location>
        <begin position="181"/>
        <end position="378"/>
    </location>
</feature>
<feature type="domain" description="Biotinyl-binding" evidence="7">
    <location>
        <begin position="653"/>
        <end position="728"/>
    </location>
</feature>
<feature type="active site" evidence="1">
    <location>
        <position position="349"/>
    </location>
</feature>
<feature type="binding site" evidence="1">
    <location>
        <position position="177"/>
    </location>
    <ligand>
        <name>ATP</name>
        <dbReference type="ChEBI" id="CHEBI:30616"/>
    </ligand>
</feature>
<feature type="binding site" evidence="5">
    <location>
        <begin position="209"/>
        <end position="270"/>
    </location>
    <ligand>
        <name>ATP</name>
        <dbReference type="ChEBI" id="CHEBI:30616"/>
    </ligand>
</feature>
<feature type="binding site" evidence="1">
    <location>
        <position position="261"/>
    </location>
    <ligand>
        <name>ATP</name>
        <dbReference type="ChEBI" id="CHEBI:30616"/>
    </ligand>
</feature>
<feature type="binding site" evidence="1">
    <location>
        <position position="296"/>
    </location>
    <ligand>
        <name>ATP</name>
        <dbReference type="ChEBI" id="CHEBI:30616"/>
    </ligand>
</feature>
<feature type="binding site" evidence="5">
    <location>
        <position position="336"/>
    </location>
    <ligand>
        <name>Mg(2+)</name>
        <dbReference type="ChEBI" id="CHEBI:18420"/>
        <label>1</label>
    </ligand>
</feature>
<feature type="binding site" evidence="5">
    <location>
        <position position="336"/>
    </location>
    <ligand>
        <name>Mn(2+)</name>
        <dbReference type="ChEBI" id="CHEBI:29035"/>
        <label>1</label>
    </ligand>
</feature>
<feature type="binding site" evidence="5">
    <location>
        <position position="349"/>
    </location>
    <ligand>
        <name>Mg(2+)</name>
        <dbReference type="ChEBI" id="CHEBI:18420"/>
        <label>1</label>
    </ligand>
</feature>
<feature type="binding site" evidence="5">
    <location>
        <position position="349"/>
    </location>
    <ligand>
        <name>Mg(2+)</name>
        <dbReference type="ChEBI" id="CHEBI:18420"/>
        <label>2</label>
    </ligand>
</feature>
<feature type="binding site" evidence="5">
    <location>
        <position position="349"/>
    </location>
    <ligand>
        <name>Mn(2+)</name>
        <dbReference type="ChEBI" id="CHEBI:29035"/>
        <label>1</label>
    </ligand>
</feature>
<feature type="binding site" evidence="5">
    <location>
        <position position="349"/>
    </location>
    <ligand>
        <name>Mn(2+)</name>
        <dbReference type="ChEBI" id="CHEBI:29035"/>
        <label>2</label>
    </ligand>
</feature>
<feature type="binding site" evidence="5">
    <location>
        <position position="351"/>
    </location>
    <ligand>
        <name>Mg(2+)</name>
        <dbReference type="ChEBI" id="CHEBI:18420"/>
        <label>2</label>
    </ligand>
</feature>
<feature type="binding site" evidence="5">
    <location>
        <position position="351"/>
    </location>
    <ligand>
        <name>Mn(2+)</name>
        <dbReference type="ChEBI" id="CHEBI:29035"/>
        <label>2</label>
    </ligand>
</feature>
<feature type="binding site" evidence="3">
    <location>
        <position position="409"/>
    </location>
    <ligand>
        <name>biotin</name>
        <dbReference type="ChEBI" id="CHEBI:57586"/>
    </ligand>
</feature>
<feature type="modified residue" description="N6-acetyllysine; alternate" evidence="4">
    <location>
        <position position="65"/>
    </location>
</feature>
<feature type="modified residue" description="N6-succinyllysine; alternate" evidence="4">
    <location>
        <position position="65"/>
    </location>
</feature>
<feature type="modified residue" description="N6-succinyllysine" evidence="4">
    <location>
        <position position="119"/>
    </location>
</feature>
<feature type="modified residue" description="N6-acetyllysine; alternate" evidence="4">
    <location>
        <position position="150"/>
    </location>
</feature>
<feature type="modified residue" description="N6-succinyllysine; alternate" evidence="4">
    <location>
        <position position="150"/>
    </location>
</feature>
<feature type="modified residue" description="N6-acetyllysine; alternate" evidence="4">
    <location>
        <position position="200"/>
    </location>
</feature>
<feature type="modified residue" description="N6-succinyllysine; alternate" evidence="4">
    <location>
        <position position="200"/>
    </location>
</feature>
<feature type="modified residue" description="Phosphoserine" evidence="4">
    <location>
        <position position="252"/>
    </location>
</feature>
<feature type="modified residue" description="N6-succinyllysine" evidence="4">
    <location>
        <position position="262"/>
    </location>
</feature>
<feature type="modified residue" description="N6-acetyllysine; alternate" evidence="4">
    <location>
        <position position="328"/>
    </location>
</feature>
<feature type="modified residue" description="N6-succinyllysine; alternate" evidence="4">
    <location>
        <position position="328"/>
    </location>
</feature>
<feature type="modified residue" description="N6-succinyllysine" evidence="4">
    <location>
        <position position="385"/>
    </location>
</feature>
<feature type="modified residue" description="N6-succinyllysine" evidence="4">
    <location>
        <position position="407"/>
    </location>
</feature>
<feature type="modified residue" description="N6-acetyllysine" evidence="4">
    <location>
        <position position="496"/>
    </location>
</feature>
<feature type="modified residue" description="N6-succinyllysine" evidence="4">
    <location>
        <position position="502"/>
    </location>
</feature>
<feature type="modified residue" description="N6-succinyllysine" evidence="4">
    <location>
        <position position="513"/>
    </location>
</feature>
<feature type="modified residue" description="N6-succinyllysine" evidence="4">
    <location>
        <position position="648"/>
    </location>
</feature>
<feature type="modified residue" description="N6-biotinyllysine; by HLCS" evidence="7 13">
    <location>
        <position position="694"/>
    </location>
</feature>
<feature type="splice variant" id="VSP_039857" description="In isoform 2." evidence="19">
    <location>
        <begin position="36"/>
        <end position="61"/>
    </location>
</feature>
<feature type="splice variant" id="VSP_044458" description="In isoform 3." evidence="19">
    <location>
        <begin position="634"/>
        <end position="680"/>
    </location>
</feature>
<feature type="sequence variant" id="VAR_009087" description="In PA-1; dbSNP:rs794727479." evidence="9">
    <original>A</original>
    <variation>P</variation>
    <location>
        <position position="75"/>
    </location>
</feature>
<feature type="sequence variant" id="VAR_009088" description="In PA-1; loss of function; dbSNP:rs141371306." evidence="8 11">
    <original>R</original>
    <variation>W</variation>
    <location>
        <position position="77"/>
    </location>
</feature>
<feature type="sequence variant" id="VAR_009089" description="In PA-1; loss of function; dbSNP:rs202247814." evidence="8">
    <original>A</original>
    <variation>T</variation>
    <location>
        <position position="138"/>
    </location>
</feature>
<feature type="sequence variant" id="VAR_009090" description="In PA-1; loss of function; dbSNP:rs202247815." evidence="8">
    <original>I</original>
    <variation>T</variation>
    <location>
        <position position="164"/>
    </location>
</feature>
<feature type="sequence variant" id="VAR_023843" description="In PA-1." evidence="11">
    <original>G</original>
    <variation>E</variation>
    <location>
        <position position="197"/>
    </location>
</feature>
<feature type="sequence variant" id="VAR_009091" description="In PA-1; dbSNP:rs375628794." evidence="9">
    <original>M</original>
    <variation>K</variation>
    <location>
        <position position="229"/>
    </location>
</feature>
<feature type="sequence variant" id="VAR_009092" description="In PA-1; dbSNP:rs2063109875." evidence="11">
    <original>Q</original>
    <variation>R</variation>
    <location>
        <position position="297"/>
    </location>
</feature>
<feature type="sequence variant" id="VAR_009093" description="In PA-1." evidence="9">
    <original>D</original>
    <variation>G</variation>
    <location>
        <position position="368"/>
    </location>
</feature>
<feature type="sequence variant" id="VAR_009094" description="In PA-1; unstable protein; loss of function; dbSNP:rs121964958." evidence="8">
    <original>M</original>
    <variation>K</variation>
    <location>
        <position position="373"/>
    </location>
</feature>
<feature type="sequence variant" id="VAR_009095" description="In PA-1; dbSNP:rs794727087." evidence="9">
    <original>G</original>
    <variation>V</variation>
    <location>
        <position position="379"/>
    </location>
</feature>
<feature type="sequence variant" id="VAR_023844" description="In PA-1." evidence="11">
    <original>C</original>
    <variation>R</variation>
    <location>
        <position position="398"/>
    </location>
</feature>
<feature type="sequence variant" id="VAR_009096" description="In PA-1; dbSNP:rs1301904623." evidence="11">
    <original>R</original>
    <variation>Q</variation>
    <location>
        <position position="399"/>
    </location>
</feature>
<feature type="sequence variant" id="VAR_009097" description="In PA-1; dbSNP:rs1443858896." evidence="11">
    <original>P</original>
    <variation>L</variation>
    <location>
        <position position="423"/>
    </location>
</feature>
<feature type="sequence variant" id="VAR_009098" description="In dbSNP:rs35719359.">
    <original>I</original>
    <variation>V</variation>
    <location>
        <position position="475"/>
    </location>
</feature>
<feature type="sequence variant" id="VAR_023845" description="In PA-1." evidence="10">
    <location>
        <position position="532"/>
    </location>
</feature>
<feature type="sequence variant" id="VAR_023846" description="In dbSNP:rs61749895." evidence="10">
    <original>V</original>
    <variation>F</variation>
    <location>
        <position position="551"/>
    </location>
</feature>
<feature type="sequence variant" id="VAR_009099" description="In PA-1; dbSNP:rs118169528." evidence="11">
    <original>W</original>
    <variation>L</variation>
    <location>
        <position position="559"/>
    </location>
</feature>
<feature type="sequence variant" id="VAR_009100" description="In PA-1; loss of function; dbSNP:rs796052018." evidence="8">
    <original>G</original>
    <variation>R</variation>
    <location>
        <position position="631"/>
    </location>
</feature>
<feature type="sequence variant" id="VAR_009101" description="In PA-1; loss of biotinylation; dbSNP:rs771438170." evidence="9">
    <original>G</original>
    <variation>R</variation>
    <location>
        <position position="668"/>
    </location>
</feature>
<feature type="sequence variant" id="VAR_009102" description="In PA-1; loss of biotinylation." evidence="9">
    <location>
        <position position="712"/>
    </location>
</feature>
<feature type="sequence conflict" description="In Ref. 2; BAG60571." evidence="20" ref="2">
    <original>K</original>
    <variation>E</variation>
    <location>
        <position position="61"/>
    </location>
</feature>
<feature type="sequence conflict" description="In Ref. 4; BAG59350." evidence="20" ref="4">
    <original>H</original>
    <variation>Y</variation>
    <location>
        <position position="93"/>
    </location>
</feature>
<feature type="sequence conflict" description="In Ref. 10; AAA60035." evidence="20" ref="10">
    <original>M</original>
    <variation>R</variation>
    <location>
        <position position="373"/>
    </location>
</feature>
<feature type="sequence conflict" description="In Ref. 10; AAA60035." evidence="20" ref="10">
    <original>KG</original>
    <variation>RS</variation>
    <location>
        <begin position="378"/>
        <end position="379"/>
    </location>
</feature>
<feature type="sequence conflict" description="In Ref. 10; AAA60035." evidence="20" ref="10">
    <original>N</original>
    <variation>H</variation>
    <location>
        <position position="558"/>
    </location>
</feature>
<feature type="sequence conflict" description="In Ref. 4; BAG59350." evidence="20" ref="4">
    <original>T</original>
    <variation>A</variation>
    <location>
        <position position="610"/>
    </location>
</feature>
<feature type="sequence conflict" description="In Ref. 11; AAA36424." evidence="20" ref="11">
    <original>D</original>
    <variation>A</variation>
    <location>
        <position position="679"/>
    </location>
</feature>
<feature type="strand" evidence="26">
    <location>
        <begin position="64"/>
        <end position="68"/>
    </location>
</feature>
<feature type="helix" evidence="26">
    <location>
        <begin position="73"/>
        <end position="85"/>
    </location>
</feature>
<feature type="strand" evidence="26">
    <location>
        <begin position="88"/>
        <end position="93"/>
    </location>
</feature>
<feature type="turn" evidence="26">
    <location>
        <begin position="96"/>
        <end position="99"/>
    </location>
</feature>
<feature type="helix" evidence="26">
    <location>
        <begin position="101"/>
        <end position="105"/>
    </location>
</feature>
<feature type="strand" evidence="26">
    <location>
        <begin position="106"/>
        <end position="111"/>
    </location>
</feature>
<feature type="helix" evidence="26">
    <location>
        <begin position="117"/>
        <end position="119"/>
    </location>
</feature>
<feature type="turn" evidence="26">
    <location>
        <begin position="120"/>
        <end position="122"/>
    </location>
</feature>
<feature type="helix" evidence="26">
    <location>
        <begin position="124"/>
        <end position="134"/>
    </location>
</feature>
<feature type="strand" evidence="26">
    <location>
        <begin position="137"/>
        <end position="140"/>
    </location>
</feature>
<feature type="strand" evidence="27">
    <location>
        <begin position="143"/>
        <end position="148"/>
    </location>
</feature>
<feature type="helix" evidence="26">
    <location>
        <begin position="150"/>
        <end position="158"/>
    </location>
</feature>
<feature type="strand" evidence="26">
    <location>
        <begin position="162"/>
        <end position="165"/>
    </location>
</feature>
<feature type="helix" evidence="26">
    <location>
        <begin position="168"/>
        <end position="175"/>
    </location>
</feature>
<feature type="helix" evidence="26">
    <location>
        <begin position="177"/>
        <end position="186"/>
    </location>
</feature>
<feature type="strand" evidence="24">
    <location>
        <begin position="199"/>
        <end position="201"/>
    </location>
</feature>
<feature type="helix" evidence="26">
    <location>
        <begin position="202"/>
        <end position="212"/>
    </location>
</feature>
<feature type="strand" evidence="26">
    <location>
        <begin position="214"/>
        <end position="222"/>
    </location>
</feature>
<feature type="turn" evidence="26">
    <location>
        <begin position="225"/>
        <end position="228"/>
    </location>
</feature>
<feature type="strand" evidence="26">
    <location>
        <begin position="229"/>
        <end position="234"/>
    </location>
</feature>
<feature type="helix" evidence="26">
    <location>
        <begin position="235"/>
        <end position="253"/>
    </location>
</feature>
<feature type="strand" evidence="26">
    <location>
        <begin position="258"/>
        <end position="262"/>
    </location>
</feature>
<feature type="strand" evidence="26">
    <location>
        <begin position="268"/>
        <end position="276"/>
    </location>
</feature>
<feature type="strand" evidence="26">
    <location>
        <begin position="282"/>
        <end position="289"/>
    </location>
</feature>
<feature type="strand" evidence="26">
    <location>
        <begin position="300"/>
        <end position="304"/>
    </location>
</feature>
<feature type="helix" evidence="26">
    <location>
        <begin position="310"/>
        <end position="326"/>
    </location>
</feature>
<feature type="strand" evidence="26">
    <location>
        <begin position="331"/>
        <end position="339"/>
    </location>
</feature>
<feature type="strand" evidence="26">
    <location>
        <begin position="345"/>
        <end position="351"/>
    </location>
</feature>
<feature type="helix" evidence="26">
    <location>
        <begin position="358"/>
        <end position="365"/>
    </location>
</feature>
<feature type="helix" evidence="26">
    <location>
        <begin position="369"/>
        <end position="378"/>
    </location>
</feature>
<feature type="helix" evidence="26">
    <location>
        <begin position="386"/>
        <end position="388"/>
    </location>
</feature>
<feature type="strand" evidence="26">
    <location>
        <begin position="393"/>
        <end position="403"/>
    </location>
</feature>
<feature type="strand" evidence="26">
    <location>
        <begin position="405"/>
        <end position="409"/>
    </location>
</feature>
<feature type="strand" evidence="26">
    <location>
        <begin position="418"/>
        <end position="421"/>
    </location>
</feature>
<feature type="strand" evidence="26">
    <location>
        <begin position="429"/>
        <end position="434"/>
    </location>
</feature>
<feature type="strand" evidence="26">
    <location>
        <begin position="448"/>
        <end position="458"/>
    </location>
</feature>
<feature type="helix" evidence="26">
    <location>
        <begin position="459"/>
        <end position="471"/>
    </location>
</feature>
<feature type="strand" evidence="26">
    <location>
        <begin position="474"/>
        <end position="478"/>
    </location>
</feature>
<feature type="helix" evidence="26">
    <location>
        <begin position="482"/>
        <end position="490"/>
    </location>
</feature>
<feature type="helix" evidence="26">
    <location>
        <begin position="492"/>
        <end position="496"/>
    </location>
</feature>
<feature type="helix" evidence="26">
    <location>
        <begin position="503"/>
        <end position="507"/>
    </location>
</feature>
<feature type="helix" evidence="26">
    <location>
        <begin position="519"/>
        <end position="539"/>
    </location>
</feature>
<feature type="strand" evidence="26">
    <location>
        <begin position="547"/>
        <end position="549"/>
    </location>
</feature>
<feature type="strand" evidence="26">
    <location>
        <begin position="559"/>
        <end position="567"/>
    </location>
</feature>
<feature type="strand" evidence="26">
    <location>
        <begin position="569"/>
        <end position="577"/>
    </location>
</feature>
<feature type="strand" evidence="26">
    <location>
        <begin position="580"/>
        <end position="585"/>
    </location>
</feature>
<feature type="strand" evidence="26">
    <location>
        <begin position="588"/>
        <end position="593"/>
    </location>
</feature>
<feature type="strand" evidence="26">
    <location>
        <begin position="598"/>
        <end position="607"/>
    </location>
</feature>
<feature type="strand" evidence="26">
    <location>
        <begin position="610"/>
        <end position="619"/>
    </location>
</feature>
<feature type="strand" evidence="26">
    <location>
        <begin position="623"/>
        <end position="629"/>
    </location>
</feature>
<feature type="strand" evidence="26">
    <location>
        <begin position="632"/>
        <end position="640"/>
    </location>
</feature>
<feature type="helix" evidence="26">
    <location>
        <begin position="641"/>
        <end position="647"/>
    </location>
</feature>
<feature type="strand" evidence="27">
    <location>
        <begin position="661"/>
        <end position="663"/>
    </location>
</feature>
<feature type="strand" evidence="25">
    <location>
        <begin position="665"/>
        <end position="667"/>
    </location>
</feature>
<feature type="strand" evidence="25">
    <location>
        <begin position="669"/>
        <end position="673"/>
    </location>
</feature>
<feature type="strand" evidence="25">
    <location>
        <begin position="688"/>
        <end position="691"/>
    </location>
</feature>
<feature type="strand" evidence="26">
    <location>
        <begin position="697"/>
        <end position="700"/>
    </location>
</feature>
<feature type="strand" evidence="26">
    <location>
        <begin position="702"/>
        <end position="710"/>
    </location>
</feature>
<feature type="strand" evidence="26">
    <location>
        <begin position="722"/>
        <end position="727"/>
    </location>
</feature>
<reference key="1">
    <citation type="journal article" date="2001" name="Mol. Genet. Metab.">
        <title>Structure of the PCCA gene and distribution of mutations causing propionic acidemia.</title>
        <authorList>
            <person name="Campeau E."/>
            <person name="Desviat L.R."/>
            <person name="Leclerc D."/>
            <person name="Wu X."/>
            <person name="Perez B."/>
            <person name="Ugarte M."/>
            <person name="Gravel R.A."/>
        </authorList>
    </citation>
    <scope>NUCLEOTIDE SEQUENCE [GENOMIC DNA / MRNA] (ISOFORM 1)</scope>
</reference>
<reference key="2">
    <citation type="journal article" date="2004" name="Nat. Genet.">
        <title>Complete sequencing and characterization of 21,243 full-length human cDNAs.</title>
        <authorList>
            <person name="Ota T."/>
            <person name="Suzuki Y."/>
            <person name="Nishikawa T."/>
            <person name="Otsuki T."/>
            <person name="Sugiyama T."/>
            <person name="Irie R."/>
            <person name="Wakamatsu A."/>
            <person name="Hayashi K."/>
            <person name="Sato H."/>
            <person name="Nagai K."/>
            <person name="Kimura K."/>
            <person name="Makita H."/>
            <person name="Sekine M."/>
            <person name="Obayashi M."/>
            <person name="Nishi T."/>
            <person name="Shibahara T."/>
            <person name="Tanaka T."/>
            <person name="Ishii S."/>
            <person name="Yamamoto J."/>
            <person name="Saito K."/>
            <person name="Kawai Y."/>
            <person name="Isono Y."/>
            <person name="Nakamura Y."/>
            <person name="Nagahari K."/>
            <person name="Murakami K."/>
            <person name="Yasuda T."/>
            <person name="Iwayanagi T."/>
            <person name="Wagatsuma M."/>
            <person name="Shiratori A."/>
            <person name="Sudo H."/>
            <person name="Hosoiri T."/>
            <person name="Kaku Y."/>
            <person name="Kodaira H."/>
            <person name="Kondo H."/>
            <person name="Sugawara M."/>
            <person name="Takahashi M."/>
            <person name="Kanda K."/>
            <person name="Yokoi T."/>
            <person name="Furuya T."/>
            <person name="Kikkawa E."/>
            <person name="Omura Y."/>
            <person name="Abe K."/>
            <person name="Kamihara K."/>
            <person name="Katsuta N."/>
            <person name="Sato K."/>
            <person name="Tanikawa M."/>
            <person name="Yamazaki M."/>
            <person name="Ninomiya K."/>
            <person name="Ishibashi T."/>
            <person name="Yamashita H."/>
            <person name="Murakawa K."/>
            <person name="Fujimori K."/>
            <person name="Tanai H."/>
            <person name="Kimata M."/>
            <person name="Watanabe M."/>
            <person name="Hiraoka S."/>
            <person name="Chiba Y."/>
            <person name="Ishida S."/>
            <person name="Ono Y."/>
            <person name="Takiguchi S."/>
            <person name="Watanabe S."/>
            <person name="Yosida M."/>
            <person name="Hotuta T."/>
            <person name="Kusano J."/>
            <person name="Kanehori K."/>
            <person name="Takahashi-Fujii A."/>
            <person name="Hara H."/>
            <person name="Tanase T.-O."/>
            <person name="Nomura Y."/>
            <person name="Togiya S."/>
            <person name="Komai F."/>
            <person name="Hara R."/>
            <person name="Takeuchi K."/>
            <person name="Arita M."/>
            <person name="Imose N."/>
            <person name="Musashino K."/>
            <person name="Yuuki H."/>
            <person name="Oshima A."/>
            <person name="Sasaki N."/>
            <person name="Aotsuka S."/>
            <person name="Yoshikawa Y."/>
            <person name="Matsunawa H."/>
            <person name="Ichihara T."/>
            <person name="Shiohata N."/>
            <person name="Sano S."/>
            <person name="Moriya S."/>
            <person name="Momiyama H."/>
            <person name="Satoh N."/>
            <person name="Takami S."/>
            <person name="Terashima Y."/>
            <person name="Suzuki O."/>
            <person name="Nakagawa S."/>
            <person name="Senoh A."/>
            <person name="Mizoguchi H."/>
            <person name="Goto Y."/>
            <person name="Shimizu F."/>
            <person name="Wakebe H."/>
            <person name="Hishigaki H."/>
            <person name="Watanabe T."/>
            <person name="Sugiyama A."/>
            <person name="Takemoto M."/>
            <person name="Kawakami B."/>
            <person name="Yamazaki M."/>
            <person name="Watanabe K."/>
            <person name="Kumagai A."/>
            <person name="Itakura S."/>
            <person name="Fukuzumi Y."/>
            <person name="Fujimori Y."/>
            <person name="Komiyama M."/>
            <person name="Tashiro H."/>
            <person name="Tanigami A."/>
            <person name="Fujiwara T."/>
            <person name="Ono T."/>
            <person name="Yamada K."/>
            <person name="Fujii Y."/>
            <person name="Ozaki K."/>
            <person name="Hirao M."/>
            <person name="Ohmori Y."/>
            <person name="Kawabata A."/>
            <person name="Hikiji T."/>
            <person name="Kobatake N."/>
            <person name="Inagaki H."/>
            <person name="Ikema Y."/>
            <person name="Okamoto S."/>
            <person name="Okitani R."/>
            <person name="Kawakami T."/>
            <person name="Noguchi S."/>
            <person name="Itoh T."/>
            <person name="Shigeta K."/>
            <person name="Senba T."/>
            <person name="Matsumura K."/>
            <person name="Nakajima Y."/>
            <person name="Mizuno T."/>
            <person name="Morinaga M."/>
            <person name="Sasaki M."/>
            <person name="Togashi T."/>
            <person name="Oyama M."/>
            <person name="Hata H."/>
            <person name="Watanabe M."/>
            <person name="Komatsu T."/>
            <person name="Mizushima-Sugano J."/>
            <person name="Satoh T."/>
            <person name="Shirai Y."/>
            <person name="Takahashi Y."/>
            <person name="Nakagawa K."/>
            <person name="Okumura K."/>
            <person name="Nagase T."/>
            <person name="Nomura N."/>
            <person name="Kikuchi H."/>
            <person name="Masuho Y."/>
            <person name="Yamashita R."/>
            <person name="Nakai K."/>
            <person name="Yada T."/>
            <person name="Nakamura Y."/>
            <person name="Ohara O."/>
            <person name="Isogai T."/>
            <person name="Sugano S."/>
        </authorList>
    </citation>
    <scope>NUCLEOTIDE SEQUENCE [LARGE SCALE MRNA] (ISOFORMS 2 AND 3)</scope>
    <source>
        <tissue>Kidney</tissue>
        <tissue>Tongue</tissue>
    </source>
</reference>
<reference key="3">
    <citation type="journal article" date="2004" name="Nature">
        <title>The DNA sequence and analysis of human chromosome 13.</title>
        <authorList>
            <person name="Dunham A."/>
            <person name="Matthews L.H."/>
            <person name="Burton J."/>
            <person name="Ashurst J.L."/>
            <person name="Howe K.L."/>
            <person name="Ashcroft K.J."/>
            <person name="Beare D.M."/>
            <person name="Burford D.C."/>
            <person name="Hunt S.E."/>
            <person name="Griffiths-Jones S."/>
            <person name="Jones M.C."/>
            <person name="Keenan S.J."/>
            <person name="Oliver K."/>
            <person name="Scott C.E."/>
            <person name="Ainscough R."/>
            <person name="Almeida J.P."/>
            <person name="Ambrose K.D."/>
            <person name="Andrews D.T."/>
            <person name="Ashwell R.I.S."/>
            <person name="Babbage A.K."/>
            <person name="Bagguley C.L."/>
            <person name="Bailey J."/>
            <person name="Bannerjee R."/>
            <person name="Barlow K.F."/>
            <person name="Bates K."/>
            <person name="Beasley H."/>
            <person name="Bird C.P."/>
            <person name="Bray-Allen S."/>
            <person name="Brown A.J."/>
            <person name="Brown J.Y."/>
            <person name="Burrill W."/>
            <person name="Carder C."/>
            <person name="Carter N.P."/>
            <person name="Chapman J.C."/>
            <person name="Clamp M.E."/>
            <person name="Clark S.Y."/>
            <person name="Clarke G."/>
            <person name="Clee C.M."/>
            <person name="Clegg S.C."/>
            <person name="Cobley V."/>
            <person name="Collins J.E."/>
            <person name="Corby N."/>
            <person name="Coville G.J."/>
            <person name="Deloukas P."/>
            <person name="Dhami P."/>
            <person name="Dunham I."/>
            <person name="Dunn M."/>
            <person name="Earthrowl M.E."/>
            <person name="Ellington A.G."/>
            <person name="Faulkner L."/>
            <person name="Frankish A.G."/>
            <person name="Frankland J."/>
            <person name="French L."/>
            <person name="Garner P."/>
            <person name="Garnett J."/>
            <person name="Gilbert J.G.R."/>
            <person name="Gilson C.J."/>
            <person name="Ghori J."/>
            <person name="Grafham D.V."/>
            <person name="Gribble S.M."/>
            <person name="Griffiths C."/>
            <person name="Hall R.E."/>
            <person name="Hammond S."/>
            <person name="Harley J.L."/>
            <person name="Hart E.A."/>
            <person name="Heath P.D."/>
            <person name="Howden P.J."/>
            <person name="Huckle E.J."/>
            <person name="Hunt P.J."/>
            <person name="Hunt A.R."/>
            <person name="Johnson C."/>
            <person name="Johnson D."/>
            <person name="Kay M."/>
            <person name="Kimberley A.M."/>
            <person name="King A."/>
            <person name="Laird G.K."/>
            <person name="Langford C.J."/>
            <person name="Lawlor S."/>
            <person name="Leongamornlert D.A."/>
            <person name="Lloyd D.M."/>
            <person name="Lloyd C."/>
            <person name="Loveland J.E."/>
            <person name="Lovell J."/>
            <person name="Martin S."/>
            <person name="Mashreghi-Mohammadi M."/>
            <person name="McLaren S.J."/>
            <person name="McMurray A."/>
            <person name="Milne S."/>
            <person name="Moore M.J.F."/>
            <person name="Nickerson T."/>
            <person name="Palmer S.A."/>
            <person name="Pearce A.V."/>
            <person name="Peck A.I."/>
            <person name="Pelan S."/>
            <person name="Phillimore B."/>
            <person name="Porter K.M."/>
            <person name="Rice C.M."/>
            <person name="Searle S."/>
            <person name="Sehra H.K."/>
            <person name="Shownkeen R."/>
            <person name="Skuce C.D."/>
            <person name="Smith M."/>
            <person name="Steward C.A."/>
            <person name="Sycamore N."/>
            <person name="Tester J."/>
            <person name="Thomas D.W."/>
            <person name="Tracey A."/>
            <person name="Tromans A."/>
            <person name="Tubby B."/>
            <person name="Wall M."/>
            <person name="Wallis J.M."/>
            <person name="West A.P."/>
            <person name="Whitehead S.L."/>
            <person name="Willey D.L."/>
            <person name="Wilming L."/>
            <person name="Wray P.W."/>
            <person name="Wright M.W."/>
            <person name="Young L."/>
            <person name="Coulson A."/>
            <person name="Durbin R.M."/>
            <person name="Hubbard T."/>
            <person name="Sulston J.E."/>
            <person name="Beck S."/>
            <person name="Bentley D.R."/>
            <person name="Rogers J."/>
            <person name="Ross M.T."/>
        </authorList>
    </citation>
    <scope>NUCLEOTIDE SEQUENCE [LARGE SCALE GENOMIC DNA]</scope>
</reference>
<reference key="4">
    <citation type="submission" date="2005-07" db="EMBL/GenBank/DDBJ databases">
        <authorList>
            <person name="Mural R.J."/>
            <person name="Istrail S."/>
            <person name="Sutton G.G."/>
            <person name="Florea L."/>
            <person name="Halpern A.L."/>
            <person name="Mobarry C.M."/>
            <person name="Lippert R."/>
            <person name="Walenz B."/>
            <person name="Shatkay H."/>
            <person name="Dew I."/>
            <person name="Miller J.R."/>
            <person name="Flanigan M.J."/>
            <person name="Edwards N.J."/>
            <person name="Bolanos R."/>
            <person name="Fasulo D."/>
            <person name="Halldorsson B.V."/>
            <person name="Hannenhalli S."/>
            <person name="Turner R."/>
            <person name="Yooseph S."/>
            <person name="Lu F."/>
            <person name="Nusskern D.R."/>
            <person name="Shue B.C."/>
            <person name="Zheng X.H."/>
            <person name="Zhong F."/>
            <person name="Delcher A.L."/>
            <person name="Huson D.H."/>
            <person name="Kravitz S.A."/>
            <person name="Mouchard L."/>
            <person name="Reinert K."/>
            <person name="Remington K.A."/>
            <person name="Clark A.G."/>
            <person name="Waterman M.S."/>
            <person name="Eichler E.E."/>
            <person name="Adams M.D."/>
            <person name="Hunkapiller M.W."/>
            <person name="Myers E.W."/>
            <person name="Venter J.C."/>
        </authorList>
    </citation>
    <scope>NUCLEOTIDE SEQUENCE [LARGE SCALE GENOMIC DNA]</scope>
</reference>
<reference key="5">
    <citation type="journal article" date="2004" name="Genome Res.">
        <title>The status, quality, and expansion of the NIH full-length cDNA project: the Mammalian Gene Collection (MGC).</title>
        <authorList>
            <consortium name="The MGC Project Team"/>
        </authorList>
    </citation>
    <scope>NUCLEOTIDE SEQUENCE [LARGE SCALE MRNA] OF 9-728 (ISOFORM 1)</scope>
    <source>
        <tissue>Placenta</tissue>
    </source>
</reference>
<reference key="6">
    <citation type="journal article" date="1989" name="Nucleic Acids Res.">
        <title>Human mitochondrial propionyl-CoA carboxylase: localization of the N-terminus of the pro- and mature alpha chains in the deduced primary sequence of a full-length cDNA.</title>
        <authorList>
            <person name="Lamhonwah A.-M."/>
            <person name="Mahuran D.J."/>
            <person name="Gravel R.A."/>
        </authorList>
    </citation>
    <scope>NUCLEOTIDE SEQUENCE [MRNA] OF 10-728 (ISOFORM 1)</scope>
</reference>
<reference key="7">
    <citation type="submission" date="1993-04" db="EMBL/GenBank/DDBJ databases">
        <authorList>
            <person name="Gravel R.A."/>
        </authorList>
    </citation>
    <scope>SEQUENCE REVISION</scope>
</reference>
<reference key="8">
    <citation type="journal article" date="2005" name="Biochem. Biophys. Res. Commun.">
        <title>Mitochondrial targeting signals and mature peptides of 3-methylcrotonyl-CoA carboxylase.</title>
        <authorList>
            <person name="Stadler S.C."/>
            <person name="Polanetz R."/>
            <person name="Meier S."/>
            <person name="Mayerhofer P.U."/>
            <person name="Herrmann J.M."/>
            <person name="Anslinger K."/>
            <person name="Roscher A.A."/>
            <person name="Roschinger W."/>
            <person name="Holzinger A."/>
        </authorList>
    </citation>
    <scope>PROTEIN SEQUENCE OF 53-58</scope>
    <scope>SUBCELLULAR LOCATION</scope>
    <source>
        <tissue>Kidney</tissue>
    </source>
</reference>
<reference key="9">
    <citation type="journal article" date="1993" name="Am. J. Hum. Genet.">
        <title>Cloning of functional alpha propionyl CoA carboxylase and correction of enzyme deficiency in pccA fibroblasts.</title>
        <authorList>
            <person name="Stankovics J."/>
            <person name="Ledley F.D."/>
        </authorList>
    </citation>
    <scope>NUCLEOTIDE SEQUENCE [MRNA] OF 364-392</scope>
    <scope>FUNCTION</scope>
    <scope>CATALYTIC ACTIVITY</scope>
    <scope>PATHWAY</scope>
    <source>
        <tissue>Liver</tissue>
    </source>
</reference>
<reference key="10">
    <citation type="journal article" date="1986" name="Proc. Natl. Acad. Sci. U.S.A.">
        <title>Isolation of cDNA clones coding for the alpha and beta chains of human propionyl-CoA carboxylase: chromosomal assignments and DNA polymorphisms associated with PCCA and PCCB genes.</title>
        <authorList>
            <person name="Lamhonwah A.-M."/>
            <person name="Barankiewicz T.J."/>
            <person name="Willard H.F."/>
            <person name="Mahuran D.J."/>
            <person name="Quan F."/>
            <person name="Gravel R.A."/>
        </authorList>
    </citation>
    <scope>NUCLEOTIDE SEQUENCE [MRNA] OF 369-561</scope>
</reference>
<reference key="11">
    <citation type="journal article" date="1987" name="Arch. Biochem. Biophys.">
        <title>Sequence homology around the biotin-binding site of human propionyl-CoA carboxylase and pyruvate carboxylase.</title>
        <authorList>
            <person name="Lamhonwah A.-M."/>
            <person name="Quan F."/>
            <person name="Gravel R.A."/>
        </authorList>
    </citation>
    <scope>NUCLEOTIDE SEQUENCE [MRNA] OF 633-728</scope>
</reference>
<reference key="12">
    <citation type="journal article" date="1980" name="J. Biol. Chem.">
        <title>Isolation and characterization of propionyl-CoA carboxylase from normal human liver. Evidence for a protomeric tetramer of nonidentical subunits.</title>
        <authorList>
            <person name="Kalousek F."/>
            <person name="Darigo M.D."/>
            <person name="Rosenberg L.E."/>
        </authorList>
    </citation>
    <scope>FUNCTION</scope>
    <scope>CATALYTIC ACTIVITY</scope>
    <scope>COFACTOR</scope>
    <scope>PATHWAY</scope>
    <scope>BIOPHYSICOCHEMICAL PROPERTIES</scope>
    <scope>SUBUNIT</scope>
</reference>
<reference key="13">
    <citation type="journal article" date="1995" name="Proc. Natl. Acad. Sci. U.S.A.">
        <title>Isolation of a cDNA encoding human holocarboxylase synthetase by functional complementation of a biotin auxotroph of Escherichia coli.</title>
        <authorList>
            <person name="Leon-Del-Rio A."/>
            <person name="Leclerc D."/>
            <person name="Akerman B."/>
            <person name="Wakamatsu N."/>
            <person name="Gravel R.A."/>
        </authorList>
    </citation>
    <scope>BIOTINYLATION BY HLCS</scope>
</reference>
<reference key="14">
    <citation type="journal article" date="2010" name="Nature">
        <title>Crystal structure of the alpha(6)beta(6) holoenzyme of propionyl-coenzyme A carboxylase.</title>
        <authorList>
            <person name="Huang C.S."/>
            <person name="Sadre-Bazzaz K."/>
            <person name="Shen Y."/>
            <person name="Deng B."/>
            <person name="Zhou Z.H."/>
            <person name="Tong L."/>
        </authorList>
    </citation>
    <scope>SUBUNIT</scope>
</reference>
<reference key="15">
    <citation type="journal article" date="2011" name="BMC Syst. Biol.">
        <title>Initial characterization of the human central proteome.</title>
        <authorList>
            <person name="Burkard T.R."/>
            <person name="Planyavsky M."/>
            <person name="Kaupe I."/>
            <person name="Breitwieser F.P."/>
            <person name="Buerckstuemmer T."/>
            <person name="Bennett K.L."/>
            <person name="Superti-Furga G."/>
            <person name="Colinge J."/>
        </authorList>
    </citation>
    <scope>IDENTIFICATION BY MASS SPECTROMETRY [LARGE SCALE ANALYSIS]</scope>
</reference>
<reference key="16">
    <citation type="journal article" date="2013" name="Mitochondrion">
        <title>Mitochondrial SIRT4-type proteins in Caenorhabditis elegans and mammals interact with pyruvate carboxylase and other acetylated biotin-dependent carboxylases.</title>
        <authorList>
            <person name="Wirth M."/>
            <person name="Karaca S."/>
            <person name="Wenzel D."/>
            <person name="Ho L."/>
            <person name="Tishkoff D."/>
            <person name="Lombard D.B."/>
            <person name="Verdin E."/>
            <person name="Urlaub H."/>
            <person name="Jedrusik-Bode M."/>
            <person name="Fischle W."/>
        </authorList>
    </citation>
    <scope>INTERACTION WITH SIRT4; SIRT3 AND SIRT5</scope>
</reference>
<reference key="17">
    <citation type="journal article" date="2014" name="J. Proteomics">
        <title>An enzyme assisted RP-RPLC approach for in-depth analysis of human liver phosphoproteome.</title>
        <authorList>
            <person name="Bian Y."/>
            <person name="Song C."/>
            <person name="Cheng K."/>
            <person name="Dong M."/>
            <person name="Wang F."/>
            <person name="Huang J."/>
            <person name="Sun D."/>
            <person name="Wang L."/>
            <person name="Ye M."/>
            <person name="Zou H."/>
        </authorList>
    </citation>
    <scope>IDENTIFICATION BY MASS SPECTROMETRY [LARGE SCALE ANALYSIS]</scope>
    <source>
        <tissue>Liver</tissue>
    </source>
</reference>
<reference key="18">
    <citation type="submission" date="2005-11" db="PDB data bank">
        <title>Solution structure of B domain from human propionyl-CoA carboxylase alpha subunit.</title>
        <authorList>
            <consortium name="RIKEN structural genomics initiative (RSGI)"/>
        </authorList>
    </citation>
    <scope>STRUCTURE BY NMR OF 175-270</scope>
</reference>
<reference key="19">
    <citation type="journal article" date="2010" name="Biochemistry">
        <title>Structural impact of human and Escherichia coli biotin carboxyl carrier proteins on biotin attachment.</title>
        <authorList>
            <person name="Healy S."/>
            <person name="McDonald M.K."/>
            <person name="Wu X."/>
            <person name="Yue W.W."/>
            <person name="Kochan G."/>
            <person name="Oppermann U."/>
            <person name="Gravel R.A."/>
        </authorList>
    </citation>
    <scope>X-RAY CRYSTALLOGRAPHY (1.50 ANGSTROMS) OF 658-728</scope>
    <scope>BIOTINYLATION AT LYS-694 BY HLCS</scope>
</reference>
<reference key="20">
    <citation type="journal article" date="1999" name="Hum. Mutat.">
        <title>Overview of mutations in the PCCA and PCCB genes causing propionic acidemia.</title>
        <authorList>
            <person name="Ugarte M."/>
            <person name="Perez-Cerda C."/>
            <person name="Rodriguez-Pombo P."/>
            <person name="Desviat L.R."/>
            <person name="Perez B."/>
            <person name="Richard E."/>
            <person name="Muro S."/>
            <person name="Campeau E."/>
            <person name="Ohura T."/>
            <person name="Gravel R.A."/>
        </authorList>
    </citation>
    <scope>REVIEW ON PA VARIANTS</scope>
</reference>
<reference key="21">
    <citation type="journal article" date="1999" name="Biochim. Biophys. Acta">
        <title>Genetic heterogeneity in propionic acidemia patients with alpha-subunit defects: identification of five novel mutations, one of them causing instability of the protein.</title>
        <authorList>
            <person name="Richard E."/>
            <person name="Desviat L.R."/>
            <person name="Perez B."/>
            <person name="Perez-Cerda C."/>
            <person name="Ugarte M."/>
        </authorList>
    </citation>
    <scope>VARIANTS PA-1 TRP-77; THR-138; THR-164; LYS-373 AND ARG-631</scope>
    <scope>CHARACTERIZATION OF VARIANTS PA-1 TRP-77; THR-138; THR-164; LYS-373 AND ARG-631</scope>
    <scope>FUNCTION</scope>
    <scope>SUBCELLULAR LOCATION</scope>
</reference>
<reference key="22">
    <citation type="journal article" date="2003" name="Mol. Genet. Metab.">
        <title>Propionic acidemia: identification of twenty-four novel mutations in Europe and North America.</title>
        <authorList>
            <person name="Perez B."/>
            <person name="Desviat L.R."/>
            <person name="Rodriguez-Pombo P."/>
            <person name="Clavero S."/>
            <person name="Navarrete R."/>
            <person name="Perez-Cerda C."/>
            <person name="Ugarte M."/>
        </authorList>
    </citation>
    <scope>VARIANT PHE-551</scope>
    <scope>VARIANT PA-1 LEU-532 DEL</scope>
</reference>
<reference key="23">
    <citation type="journal article" date="2004" name="Mol. Genet. Metab.">
        <title>Mutation spectrum of the PCCA and PCCB genes in Japanese patients with propionic acidemia.</title>
        <authorList>
            <person name="Yang X."/>
            <person name="Sakamoto O."/>
            <person name="Matsubara Y."/>
            <person name="Kure S."/>
            <person name="Suzuki Y."/>
            <person name="Aoki Y."/>
            <person name="Yamaguchi S."/>
            <person name="Takahashi Y."/>
            <person name="Nishikubo T."/>
            <person name="Kawaguchi C."/>
            <person name="Yoshioka A."/>
            <person name="Kimura T."/>
            <person name="Hayasaka K."/>
            <person name="Kohno Y."/>
            <person name="Iinuma K."/>
            <person name="Ohura T."/>
        </authorList>
    </citation>
    <scope>VARIANTS PA-1 TRP-77; GLU-197; ARG-297; ARG-398; GLN-399; LEU-423 AND LEU-559</scope>
</reference>
<reference key="24">
    <citation type="journal article" date="1999" name="Mol. Genet. Metab.">
        <title>Coding sequence mutations in the alpha subunit of propionyl-CoA carboxylase in patients with propionic acidemia.</title>
        <authorList>
            <person name="Campeau E."/>
            <person name="Dupuis L."/>
            <person name="Leon-Del-Rio A."/>
            <person name="Gravel R."/>
        </authorList>
    </citation>
    <scope>VARIANTS PA-1 PRO-75; LYS-229; GLY-368; VAL-379; ARG-668 AND CYS-712 DEL</scope>
    <scope>CHARACTERIZATION OF VARIANTS PA-1 ARG-668 AND CYS-712 DEL</scope>
    <scope>DOMAIN</scope>
    <scope>BIOTINYLATION</scope>
</reference>